<feature type="chain" id="PRO_1000094336" description="2-C-methyl-D-erythritol 4-phosphate cytidylyltransferase">
    <location>
        <begin position="1"/>
        <end position="243"/>
    </location>
</feature>
<feature type="site" description="Transition state stabilizer" evidence="1">
    <location>
        <position position="15"/>
    </location>
</feature>
<feature type="site" description="Transition state stabilizer" evidence="1">
    <location>
        <position position="24"/>
    </location>
</feature>
<feature type="site" description="Positions MEP for the nucleophilic attack" evidence="1">
    <location>
        <position position="164"/>
    </location>
</feature>
<feature type="site" description="Positions MEP for the nucleophilic attack" evidence="1">
    <location>
        <position position="222"/>
    </location>
</feature>
<gene>
    <name evidence="1" type="primary">ispD</name>
    <name type="ordered locus">Ppha_1615</name>
</gene>
<accession>B4SAG7</accession>
<comment type="function">
    <text evidence="1">Catalyzes the formation of 4-diphosphocytidyl-2-C-methyl-D-erythritol from CTP and 2-C-methyl-D-erythritol 4-phosphate (MEP).</text>
</comment>
<comment type="catalytic activity">
    <reaction evidence="1">
        <text>2-C-methyl-D-erythritol 4-phosphate + CTP + H(+) = 4-CDP-2-C-methyl-D-erythritol + diphosphate</text>
        <dbReference type="Rhea" id="RHEA:13429"/>
        <dbReference type="ChEBI" id="CHEBI:15378"/>
        <dbReference type="ChEBI" id="CHEBI:33019"/>
        <dbReference type="ChEBI" id="CHEBI:37563"/>
        <dbReference type="ChEBI" id="CHEBI:57823"/>
        <dbReference type="ChEBI" id="CHEBI:58262"/>
        <dbReference type="EC" id="2.7.7.60"/>
    </reaction>
</comment>
<comment type="pathway">
    <text evidence="1">Isoprenoid biosynthesis; isopentenyl diphosphate biosynthesis via DXP pathway; isopentenyl diphosphate from 1-deoxy-D-xylulose 5-phosphate: step 2/6.</text>
</comment>
<comment type="similarity">
    <text evidence="1">Belongs to the IspD/TarI cytidylyltransferase family. IspD subfamily.</text>
</comment>
<dbReference type="EC" id="2.7.7.60" evidence="1"/>
<dbReference type="EMBL" id="CP001110">
    <property type="protein sequence ID" value="ACF43853.1"/>
    <property type="molecule type" value="Genomic_DNA"/>
</dbReference>
<dbReference type="RefSeq" id="WP_012508340.1">
    <property type="nucleotide sequence ID" value="NC_011060.1"/>
</dbReference>
<dbReference type="SMR" id="B4SAG7"/>
<dbReference type="STRING" id="324925.Ppha_1615"/>
<dbReference type="KEGG" id="pph:Ppha_1615"/>
<dbReference type="eggNOG" id="COG1211">
    <property type="taxonomic scope" value="Bacteria"/>
</dbReference>
<dbReference type="HOGENOM" id="CLU_061281_2_2_10"/>
<dbReference type="OrthoDB" id="9806837at2"/>
<dbReference type="UniPathway" id="UPA00056">
    <property type="reaction ID" value="UER00093"/>
</dbReference>
<dbReference type="Proteomes" id="UP000002724">
    <property type="component" value="Chromosome"/>
</dbReference>
<dbReference type="GO" id="GO:0050518">
    <property type="term" value="F:2-C-methyl-D-erythritol 4-phosphate cytidylyltransferase activity"/>
    <property type="evidence" value="ECO:0007669"/>
    <property type="project" value="UniProtKB-UniRule"/>
</dbReference>
<dbReference type="GO" id="GO:0019288">
    <property type="term" value="P:isopentenyl diphosphate biosynthetic process, methylerythritol 4-phosphate pathway"/>
    <property type="evidence" value="ECO:0007669"/>
    <property type="project" value="UniProtKB-UniRule"/>
</dbReference>
<dbReference type="CDD" id="cd02516">
    <property type="entry name" value="CDP-ME_synthetase"/>
    <property type="match status" value="1"/>
</dbReference>
<dbReference type="FunFam" id="3.90.550.10:FF:000003">
    <property type="entry name" value="2-C-methyl-D-erythritol 4-phosphate cytidylyltransferase"/>
    <property type="match status" value="1"/>
</dbReference>
<dbReference type="Gene3D" id="3.90.550.10">
    <property type="entry name" value="Spore Coat Polysaccharide Biosynthesis Protein SpsA, Chain A"/>
    <property type="match status" value="1"/>
</dbReference>
<dbReference type="HAMAP" id="MF_00108">
    <property type="entry name" value="IspD"/>
    <property type="match status" value="1"/>
</dbReference>
<dbReference type="InterPro" id="IPR001228">
    <property type="entry name" value="IspD"/>
</dbReference>
<dbReference type="InterPro" id="IPR034683">
    <property type="entry name" value="IspD/TarI"/>
</dbReference>
<dbReference type="InterPro" id="IPR050088">
    <property type="entry name" value="IspD/TarI_cytidylyltransf_bact"/>
</dbReference>
<dbReference type="InterPro" id="IPR018294">
    <property type="entry name" value="ISPD_synthase_CS"/>
</dbReference>
<dbReference type="InterPro" id="IPR029044">
    <property type="entry name" value="Nucleotide-diphossugar_trans"/>
</dbReference>
<dbReference type="NCBIfam" id="TIGR00453">
    <property type="entry name" value="ispD"/>
    <property type="match status" value="1"/>
</dbReference>
<dbReference type="PANTHER" id="PTHR32125">
    <property type="entry name" value="2-C-METHYL-D-ERYTHRITOL 4-PHOSPHATE CYTIDYLYLTRANSFERASE, CHLOROPLASTIC"/>
    <property type="match status" value="1"/>
</dbReference>
<dbReference type="PANTHER" id="PTHR32125:SF4">
    <property type="entry name" value="2-C-METHYL-D-ERYTHRITOL 4-PHOSPHATE CYTIDYLYLTRANSFERASE, CHLOROPLASTIC"/>
    <property type="match status" value="1"/>
</dbReference>
<dbReference type="Pfam" id="PF01128">
    <property type="entry name" value="IspD"/>
    <property type="match status" value="1"/>
</dbReference>
<dbReference type="SUPFAM" id="SSF53448">
    <property type="entry name" value="Nucleotide-diphospho-sugar transferases"/>
    <property type="match status" value="1"/>
</dbReference>
<dbReference type="PROSITE" id="PS01295">
    <property type="entry name" value="ISPD"/>
    <property type="match status" value="1"/>
</dbReference>
<protein>
    <recommendedName>
        <fullName evidence="1">2-C-methyl-D-erythritol 4-phosphate cytidylyltransferase</fullName>
        <ecNumber evidence="1">2.7.7.60</ecNumber>
    </recommendedName>
    <alternativeName>
        <fullName evidence="1">4-diphosphocytidyl-2C-methyl-D-erythritol synthase</fullName>
    </alternativeName>
    <alternativeName>
        <fullName evidence="1">MEP cytidylyltransferase</fullName>
        <shortName evidence="1">MCT</shortName>
    </alternativeName>
</protein>
<organism>
    <name type="scientific">Pelodictyon phaeoclathratiforme (strain DSM 5477 / BU-1)</name>
    <dbReference type="NCBI Taxonomy" id="324925"/>
    <lineage>
        <taxon>Bacteria</taxon>
        <taxon>Pseudomonadati</taxon>
        <taxon>Chlorobiota</taxon>
        <taxon>Chlorobiia</taxon>
        <taxon>Chlorobiales</taxon>
        <taxon>Chlorobiaceae</taxon>
        <taxon>Chlorobium/Pelodictyon group</taxon>
        <taxon>Pelodictyon</taxon>
    </lineage>
</organism>
<proteinExistence type="inferred from homology"/>
<name>ISPD_PELPB</name>
<sequence length="243" mass="27036">MQATAIIAASGIGKRMQLREGESKQLLEVGGFPVIYHTLKAFQMASSVKAIYIATRLENRSILEELAAASGFSKLKAIIEGGKERQDSVYNCIRAIEEEKRLTGASAEIILVHDGARPFIRSEEIDEIARLSMQYGACVPANRPKDTIKYVGENPEFFGETLDRSKLLQVQTPQGFQSNLLIQAHEQAELEGWYATDDAALVERFFPEQPVKIFETGYHNIKITTPEDIPVAEAIFSQISTRS</sequence>
<keyword id="KW-0414">Isoprene biosynthesis</keyword>
<keyword id="KW-0548">Nucleotidyltransferase</keyword>
<keyword id="KW-1185">Reference proteome</keyword>
<keyword id="KW-0808">Transferase</keyword>
<reference key="1">
    <citation type="submission" date="2008-06" db="EMBL/GenBank/DDBJ databases">
        <title>Complete sequence of Pelodictyon phaeoclathratiforme BU-1.</title>
        <authorList>
            <consortium name="US DOE Joint Genome Institute"/>
            <person name="Lucas S."/>
            <person name="Copeland A."/>
            <person name="Lapidus A."/>
            <person name="Glavina del Rio T."/>
            <person name="Dalin E."/>
            <person name="Tice H."/>
            <person name="Bruce D."/>
            <person name="Goodwin L."/>
            <person name="Pitluck S."/>
            <person name="Schmutz J."/>
            <person name="Larimer F."/>
            <person name="Land M."/>
            <person name="Hauser L."/>
            <person name="Kyrpides N."/>
            <person name="Mikhailova N."/>
            <person name="Liu Z."/>
            <person name="Li T."/>
            <person name="Zhao F."/>
            <person name="Overmann J."/>
            <person name="Bryant D.A."/>
            <person name="Richardson P."/>
        </authorList>
    </citation>
    <scope>NUCLEOTIDE SEQUENCE [LARGE SCALE GENOMIC DNA]</scope>
    <source>
        <strain>DSM 5477 / BU-1</strain>
    </source>
</reference>
<evidence type="ECO:0000255" key="1">
    <source>
        <dbReference type="HAMAP-Rule" id="MF_00108"/>
    </source>
</evidence>